<name>P27K_BOMMO</name>
<dbReference type="EMBL" id="AB062103">
    <property type="protein sequence ID" value="BAB87849.1"/>
    <property type="molecule type" value="mRNA"/>
</dbReference>
<dbReference type="RefSeq" id="NP_001036878.1">
    <property type="nucleotide sequence ID" value="NM_001043413.1"/>
</dbReference>
<dbReference type="FunCoup" id="Q8T113">
    <property type="interactions" value="8"/>
</dbReference>
<dbReference type="STRING" id="7091.Q8T113"/>
<dbReference type="PaxDb" id="7091-BGIBMGA000462-TA"/>
<dbReference type="EnsemblMetazoa" id="NM_001043413.1">
    <property type="protein sequence ID" value="NP_001036878.1"/>
    <property type="gene ID" value="GeneID_692422"/>
</dbReference>
<dbReference type="GeneID" id="692422"/>
<dbReference type="KEGG" id="bmor:692422"/>
<dbReference type="CTD" id="692422"/>
<dbReference type="eggNOG" id="ENOG502SR8Y">
    <property type="taxonomic scope" value="Eukaryota"/>
</dbReference>
<dbReference type="HOGENOM" id="CLU_074913_0_0_1"/>
<dbReference type="InParanoid" id="Q8T113"/>
<dbReference type="OMA" id="HHLEQCS"/>
<dbReference type="OrthoDB" id="635214at7088"/>
<dbReference type="Proteomes" id="UP000005204">
    <property type="component" value="Unassembled WGS sequence"/>
</dbReference>
<dbReference type="GO" id="GO:0005576">
    <property type="term" value="C:extracellular region"/>
    <property type="evidence" value="ECO:0007669"/>
    <property type="project" value="UniProtKB-SubCell"/>
</dbReference>
<dbReference type="InterPro" id="IPR009832">
    <property type="entry name" value="DUF1397"/>
</dbReference>
<dbReference type="PANTHER" id="PTHR20997">
    <property type="entry name" value="EG:BACR42I17.2 PROTEIN-RELATED"/>
    <property type="match status" value="1"/>
</dbReference>
<dbReference type="PANTHER" id="PTHR20997:SF2">
    <property type="entry name" value="EG:BACR42I17.2 PROTEIN-RELATED"/>
    <property type="match status" value="1"/>
</dbReference>
<dbReference type="Pfam" id="PF07165">
    <property type="entry name" value="DUF1397"/>
    <property type="match status" value="1"/>
</dbReference>
<sequence>MMWKTVLITIFAAGVLADDFSQITAVVTSQCTKNNAEDKVPEVEAALRTFGNCLKGLVDLNVLKTEIEEAKPNGALDEVFKKYCDKSAQLKGCISSVLQGVRPCVGNEYANHINDAQNSTNQLIDFVCYKDGDRIALFIAEGGPECFQQKTENLKTCFLNLKQSFPTVESANNLSLVEKCAKVDEMTSCIVKSLEECSTPTPANMAESLIKFMRKDSPCHTALPKTD</sequence>
<accession>Q8T113</accession>
<accession>P82225</accession>
<protein>
    <recommendedName>
        <fullName>27 kDa glycoprotein</fullName>
    </recommendedName>
    <alternativeName>
        <fullName>P27K</fullName>
    </alternativeName>
</protein>
<comment type="subcellular location">
    <subcellularLocation>
        <location evidence="3">Secreted</location>
    </subcellularLocation>
</comment>
<comment type="tissue specificity">
    <text evidence="3">Expressed in the subesophageal body, fat bodies, hemocytes, midgut and Malpighian tubules. Not expressed in silk glands.</text>
</comment>
<comment type="similarity">
    <text evidence="4">Belongs to the UPF0408 family.</text>
</comment>
<reference evidence="5" key="1">
    <citation type="journal article" date="2003" name="J. Insect Biotechnol. Sericology">
        <title>Identification of novel tissue-specific proteins in the suboesophageal body of the silkworm, Bombyx mori.</title>
        <authorList>
            <person name="Tan A."/>
            <person name="Tanaka H."/>
            <person name="Sato N."/>
            <person name="Yaguchi M."/>
            <person name="Nagata M."/>
            <person name="Suzuki K."/>
        </authorList>
    </citation>
    <scope>NUCLEOTIDE SEQUENCE [MRNA]</scope>
    <scope>PROTEIN SEQUENCE OF 18-26</scope>
    <scope>SUBCELLULAR LOCATION</scope>
    <scope>TISSUE SPECIFICITY</scope>
</reference>
<reference evidence="4" key="2">
    <citation type="journal article" date="2001" name="Yi Chuan Xue Bao">
        <title>Protein database for several tissues derived from five instar of silkworm.</title>
        <authorList>
            <person name="Zhong B.-X."/>
        </authorList>
    </citation>
    <scope>PROTEIN SEQUENCE OF 18-37</scope>
    <source>
        <strain evidence="2">Xinhang X Keming</strain>
        <tissue evidence="2">Body wall</tissue>
        <tissue evidence="2">Fat body</tissue>
    </source>
</reference>
<keyword id="KW-0903">Direct protein sequencing</keyword>
<keyword id="KW-0325">Glycoprotein</keyword>
<keyword id="KW-1185">Reference proteome</keyword>
<keyword id="KW-0964">Secreted</keyword>
<keyword id="KW-0732">Signal</keyword>
<evidence type="ECO:0000255" key="1"/>
<evidence type="ECO:0000269" key="2">
    <source>
    </source>
</evidence>
<evidence type="ECO:0000269" key="3">
    <source ref="1"/>
</evidence>
<evidence type="ECO:0000305" key="4"/>
<evidence type="ECO:0000312" key="5">
    <source>
        <dbReference type="EMBL" id="BAB87849.1"/>
    </source>
</evidence>
<organism>
    <name type="scientific">Bombyx mori</name>
    <name type="common">Silk moth</name>
    <dbReference type="NCBI Taxonomy" id="7091"/>
    <lineage>
        <taxon>Eukaryota</taxon>
        <taxon>Metazoa</taxon>
        <taxon>Ecdysozoa</taxon>
        <taxon>Arthropoda</taxon>
        <taxon>Hexapoda</taxon>
        <taxon>Insecta</taxon>
        <taxon>Pterygota</taxon>
        <taxon>Neoptera</taxon>
        <taxon>Endopterygota</taxon>
        <taxon>Lepidoptera</taxon>
        <taxon>Glossata</taxon>
        <taxon>Ditrysia</taxon>
        <taxon>Bombycoidea</taxon>
        <taxon>Bombycidae</taxon>
        <taxon>Bombycinae</taxon>
        <taxon>Bombyx</taxon>
    </lineage>
</organism>
<feature type="signal peptide" evidence="2 3">
    <location>
        <begin position="1"/>
        <end position="17"/>
    </location>
</feature>
<feature type="chain" id="PRO_5000049719" description="27 kDa glycoprotein" evidence="3">
    <location>
        <begin position="18"/>
        <end position="227"/>
    </location>
</feature>
<feature type="glycosylation site" description="N-linked (GlcNAc...) asparagine" evidence="1">
    <location>
        <position position="118"/>
    </location>
</feature>
<feature type="glycosylation site" description="N-linked (GlcNAc...) asparagine" evidence="1">
    <location>
        <position position="173"/>
    </location>
</feature>
<proteinExistence type="evidence at protein level"/>